<feature type="chain" id="PRO_1000081777" description="Small ribosomal subunit protein uS19">
    <location>
        <begin position="1"/>
        <end position="91"/>
    </location>
</feature>
<name>RS19_MARMS</name>
<evidence type="ECO:0000255" key="1">
    <source>
        <dbReference type="HAMAP-Rule" id="MF_00531"/>
    </source>
</evidence>
<evidence type="ECO:0000305" key="2"/>
<sequence length="91" mass="10368">MPRSLKKGPFIDLHLLKKVEAAVEKNDRRPIKTWSRRSTIFPDFVGLTIAVHNGRQHVPVLVTEDMVGHKLGEFAPTRTYRGHAADKKAKR</sequence>
<organism>
    <name type="scientific">Marinomonas sp. (strain MWYL1)</name>
    <dbReference type="NCBI Taxonomy" id="400668"/>
    <lineage>
        <taxon>Bacteria</taxon>
        <taxon>Pseudomonadati</taxon>
        <taxon>Pseudomonadota</taxon>
        <taxon>Gammaproteobacteria</taxon>
        <taxon>Oceanospirillales</taxon>
        <taxon>Oceanospirillaceae</taxon>
        <taxon>Marinomonas</taxon>
    </lineage>
</organism>
<comment type="function">
    <text evidence="1">Protein S19 forms a complex with S13 that binds strongly to the 16S ribosomal RNA.</text>
</comment>
<comment type="similarity">
    <text evidence="1">Belongs to the universal ribosomal protein uS19 family.</text>
</comment>
<accession>A6W388</accession>
<reference key="1">
    <citation type="submission" date="2007-06" db="EMBL/GenBank/DDBJ databases">
        <title>Complete sequence of Marinomonas sp. MWYL1.</title>
        <authorList>
            <consortium name="US DOE Joint Genome Institute"/>
            <person name="Copeland A."/>
            <person name="Lucas S."/>
            <person name="Lapidus A."/>
            <person name="Barry K."/>
            <person name="Glavina del Rio T."/>
            <person name="Dalin E."/>
            <person name="Tice H."/>
            <person name="Pitluck S."/>
            <person name="Kiss H."/>
            <person name="Brettin T."/>
            <person name="Bruce D."/>
            <person name="Detter J.C."/>
            <person name="Han C."/>
            <person name="Schmutz J."/>
            <person name="Larimer F."/>
            <person name="Land M."/>
            <person name="Hauser L."/>
            <person name="Kyrpides N."/>
            <person name="Kim E."/>
            <person name="Johnston A.W.B."/>
            <person name="Todd J.D."/>
            <person name="Rogers R."/>
            <person name="Wexler M."/>
            <person name="Bond P.L."/>
            <person name="Li Y."/>
            <person name="Richardson P."/>
        </authorList>
    </citation>
    <scope>NUCLEOTIDE SEQUENCE [LARGE SCALE GENOMIC DNA]</scope>
    <source>
        <strain>MWYL1</strain>
    </source>
</reference>
<keyword id="KW-0687">Ribonucleoprotein</keyword>
<keyword id="KW-0689">Ribosomal protein</keyword>
<keyword id="KW-0694">RNA-binding</keyword>
<keyword id="KW-0699">rRNA-binding</keyword>
<dbReference type="EMBL" id="CP000749">
    <property type="protein sequence ID" value="ABR73167.1"/>
    <property type="molecule type" value="Genomic_DNA"/>
</dbReference>
<dbReference type="SMR" id="A6W388"/>
<dbReference type="STRING" id="400668.Mmwyl1_4272"/>
<dbReference type="KEGG" id="mmw:Mmwyl1_4272"/>
<dbReference type="eggNOG" id="COG0185">
    <property type="taxonomic scope" value="Bacteria"/>
</dbReference>
<dbReference type="HOGENOM" id="CLU_144911_0_1_6"/>
<dbReference type="OrthoDB" id="9797833at2"/>
<dbReference type="GO" id="GO:0005737">
    <property type="term" value="C:cytoplasm"/>
    <property type="evidence" value="ECO:0007669"/>
    <property type="project" value="UniProtKB-ARBA"/>
</dbReference>
<dbReference type="GO" id="GO:0015935">
    <property type="term" value="C:small ribosomal subunit"/>
    <property type="evidence" value="ECO:0007669"/>
    <property type="project" value="InterPro"/>
</dbReference>
<dbReference type="GO" id="GO:0019843">
    <property type="term" value="F:rRNA binding"/>
    <property type="evidence" value="ECO:0007669"/>
    <property type="project" value="UniProtKB-UniRule"/>
</dbReference>
<dbReference type="GO" id="GO:0003735">
    <property type="term" value="F:structural constituent of ribosome"/>
    <property type="evidence" value="ECO:0007669"/>
    <property type="project" value="InterPro"/>
</dbReference>
<dbReference type="GO" id="GO:0000028">
    <property type="term" value="P:ribosomal small subunit assembly"/>
    <property type="evidence" value="ECO:0007669"/>
    <property type="project" value="TreeGrafter"/>
</dbReference>
<dbReference type="GO" id="GO:0006412">
    <property type="term" value="P:translation"/>
    <property type="evidence" value="ECO:0007669"/>
    <property type="project" value="UniProtKB-UniRule"/>
</dbReference>
<dbReference type="FunFam" id="3.30.860.10:FF:000001">
    <property type="entry name" value="30S ribosomal protein S19"/>
    <property type="match status" value="1"/>
</dbReference>
<dbReference type="Gene3D" id="3.30.860.10">
    <property type="entry name" value="30s Ribosomal Protein S19, Chain A"/>
    <property type="match status" value="1"/>
</dbReference>
<dbReference type="HAMAP" id="MF_00531">
    <property type="entry name" value="Ribosomal_uS19"/>
    <property type="match status" value="1"/>
</dbReference>
<dbReference type="InterPro" id="IPR002222">
    <property type="entry name" value="Ribosomal_uS19"/>
</dbReference>
<dbReference type="InterPro" id="IPR005732">
    <property type="entry name" value="Ribosomal_uS19_bac-type"/>
</dbReference>
<dbReference type="InterPro" id="IPR020934">
    <property type="entry name" value="Ribosomal_uS19_CS"/>
</dbReference>
<dbReference type="InterPro" id="IPR023575">
    <property type="entry name" value="Ribosomal_uS19_SF"/>
</dbReference>
<dbReference type="NCBIfam" id="TIGR01050">
    <property type="entry name" value="rpsS_bact"/>
    <property type="match status" value="1"/>
</dbReference>
<dbReference type="PANTHER" id="PTHR11880">
    <property type="entry name" value="RIBOSOMAL PROTEIN S19P FAMILY MEMBER"/>
    <property type="match status" value="1"/>
</dbReference>
<dbReference type="PANTHER" id="PTHR11880:SF8">
    <property type="entry name" value="SMALL RIBOSOMAL SUBUNIT PROTEIN US19M"/>
    <property type="match status" value="1"/>
</dbReference>
<dbReference type="Pfam" id="PF00203">
    <property type="entry name" value="Ribosomal_S19"/>
    <property type="match status" value="1"/>
</dbReference>
<dbReference type="PIRSF" id="PIRSF002144">
    <property type="entry name" value="Ribosomal_S19"/>
    <property type="match status" value="1"/>
</dbReference>
<dbReference type="PRINTS" id="PR00975">
    <property type="entry name" value="RIBOSOMALS19"/>
</dbReference>
<dbReference type="SUPFAM" id="SSF54570">
    <property type="entry name" value="Ribosomal protein S19"/>
    <property type="match status" value="1"/>
</dbReference>
<dbReference type="PROSITE" id="PS00323">
    <property type="entry name" value="RIBOSOMAL_S19"/>
    <property type="match status" value="1"/>
</dbReference>
<gene>
    <name evidence="1" type="primary">rpsS</name>
    <name type="ordered locus">Mmwyl1_4272</name>
</gene>
<proteinExistence type="inferred from homology"/>
<protein>
    <recommendedName>
        <fullName evidence="1">Small ribosomal subunit protein uS19</fullName>
    </recommendedName>
    <alternativeName>
        <fullName evidence="2">30S ribosomal protein S19</fullName>
    </alternativeName>
</protein>